<evidence type="ECO:0000250" key="1">
    <source>
        <dbReference type="UniProtKB" id="P00771"/>
    </source>
</evidence>
<evidence type="ECO:0000250" key="2">
    <source>
        <dbReference type="UniProtKB" id="Q00871"/>
    </source>
</evidence>
<evidence type="ECO:0000255" key="3"/>
<evidence type="ECO:0000255" key="4">
    <source>
        <dbReference type="PROSITE-ProRule" id="PRU00274"/>
    </source>
</evidence>
<evidence type="ECO:0000255" key="5">
    <source>
        <dbReference type="PROSITE-ProRule" id="PRU10078"/>
    </source>
</evidence>
<evidence type="ECO:0000255" key="6">
    <source>
        <dbReference type="PROSITE-ProRule" id="PRU10079"/>
    </source>
</evidence>
<evidence type="ECO:0000269" key="7">
    <source>
    </source>
</evidence>
<evidence type="ECO:0000305" key="8"/>
<evidence type="ECO:0000312" key="9">
    <source>
        <dbReference type="EMBL" id="CAA76928.1"/>
    </source>
</evidence>
<comment type="function">
    <text evidence="2">Serine protease with chymotryptic and collagenolytic activities.</text>
</comment>
<comment type="catalytic activity">
    <reaction evidence="2 5 6">
        <text>Preferential cleavage: Tyr-|-Xaa, Trp-|-Xaa, Phe-|-Xaa, Leu-|-Xaa.</text>
        <dbReference type="EC" id="3.4.21.1"/>
    </reaction>
</comment>
<comment type="subcellular location">
    <subcellularLocation>
        <location evidence="2">Secreted</location>
        <location evidence="2">Extracellular space</location>
    </subcellularLocation>
</comment>
<comment type="tissue specificity">
    <text evidence="7">Expressed in larval carcasses and gut, and adult gut.</text>
</comment>
<comment type="developmental stage">
    <text evidence="7">Ovarial and mature eggs, larvae and adult.</text>
</comment>
<comment type="similarity">
    <text evidence="4">Belongs to the peptidase S1 family.</text>
</comment>
<name>CTR_PHACE</name>
<dbReference type="EC" id="3.4.21.1"/>
<dbReference type="EMBL" id="Y17904">
    <property type="protein sequence ID" value="CAA76928.1"/>
    <property type="molecule type" value="mRNA"/>
</dbReference>
<dbReference type="SMR" id="O97398"/>
<dbReference type="MEROPS" id="S01.082"/>
<dbReference type="OrthoDB" id="5565075at2759"/>
<dbReference type="GO" id="GO:0005576">
    <property type="term" value="C:extracellular region"/>
    <property type="evidence" value="ECO:0007669"/>
    <property type="project" value="UniProtKB-SubCell"/>
</dbReference>
<dbReference type="GO" id="GO:0004252">
    <property type="term" value="F:serine-type endopeptidase activity"/>
    <property type="evidence" value="ECO:0007669"/>
    <property type="project" value="UniProtKB-EC"/>
</dbReference>
<dbReference type="GO" id="GO:0030574">
    <property type="term" value="P:collagen catabolic process"/>
    <property type="evidence" value="ECO:0007669"/>
    <property type="project" value="UniProtKB-KW"/>
</dbReference>
<dbReference type="GO" id="GO:0007586">
    <property type="term" value="P:digestion"/>
    <property type="evidence" value="ECO:0007669"/>
    <property type="project" value="UniProtKB-KW"/>
</dbReference>
<dbReference type="GO" id="GO:0006508">
    <property type="term" value="P:proteolysis"/>
    <property type="evidence" value="ECO:0007669"/>
    <property type="project" value="UniProtKB-KW"/>
</dbReference>
<dbReference type="CDD" id="cd00190">
    <property type="entry name" value="Tryp_SPc"/>
    <property type="match status" value="1"/>
</dbReference>
<dbReference type="FunFam" id="2.40.10.10:FF:000036">
    <property type="entry name" value="Trypsin beta"/>
    <property type="match status" value="1"/>
</dbReference>
<dbReference type="FunFam" id="2.40.10.10:FF:000004">
    <property type="entry name" value="Tryptase gamma 1"/>
    <property type="match status" value="1"/>
</dbReference>
<dbReference type="Gene3D" id="2.40.10.10">
    <property type="entry name" value="Trypsin-like serine proteases"/>
    <property type="match status" value="2"/>
</dbReference>
<dbReference type="InterPro" id="IPR009003">
    <property type="entry name" value="Peptidase_S1_PA"/>
</dbReference>
<dbReference type="InterPro" id="IPR043504">
    <property type="entry name" value="Peptidase_S1_PA_chymotrypsin"/>
</dbReference>
<dbReference type="InterPro" id="IPR001314">
    <property type="entry name" value="Peptidase_S1A"/>
</dbReference>
<dbReference type="InterPro" id="IPR001254">
    <property type="entry name" value="Trypsin_dom"/>
</dbReference>
<dbReference type="InterPro" id="IPR018114">
    <property type="entry name" value="TRYPSIN_HIS"/>
</dbReference>
<dbReference type="InterPro" id="IPR033116">
    <property type="entry name" value="TRYPSIN_SER"/>
</dbReference>
<dbReference type="PANTHER" id="PTHR24271:SF81">
    <property type="entry name" value="GRANZYME B"/>
    <property type="match status" value="1"/>
</dbReference>
<dbReference type="PANTHER" id="PTHR24271">
    <property type="entry name" value="KALLIKREIN-RELATED"/>
    <property type="match status" value="1"/>
</dbReference>
<dbReference type="Pfam" id="PF00089">
    <property type="entry name" value="Trypsin"/>
    <property type="match status" value="1"/>
</dbReference>
<dbReference type="PRINTS" id="PR00722">
    <property type="entry name" value="CHYMOTRYPSIN"/>
</dbReference>
<dbReference type="SMART" id="SM00020">
    <property type="entry name" value="Tryp_SPc"/>
    <property type="match status" value="1"/>
</dbReference>
<dbReference type="SUPFAM" id="SSF50494">
    <property type="entry name" value="Trypsin-like serine proteases"/>
    <property type="match status" value="1"/>
</dbReference>
<dbReference type="PROSITE" id="PS50240">
    <property type="entry name" value="TRYPSIN_DOM"/>
    <property type="match status" value="1"/>
</dbReference>
<dbReference type="PROSITE" id="PS00134">
    <property type="entry name" value="TRYPSIN_HIS"/>
    <property type="match status" value="1"/>
</dbReference>
<dbReference type="PROSITE" id="PS00135">
    <property type="entry name" value="TRYPSIN_SER"/>
    <property type="match status" value="1"/>
</dbReference>
<sequence length="276" mass="29868">MKVALVVLALFGVSLAASIDNIEIPPSKNIYVEPINQPEVDPSLEIVNGQEVVPHSIPYQIFLVASAGETSWTCGGSLITKRYVLTAAHCIQGAKSVHVTLGAHNLAKHEASKVTVNGRSWVIHEKYDSTNIDNDIGVIQLERNLTLTRSIQLARLPSLRDVGINLEGRTATVSGWGLTNGIFQTTTDVLRANNTIISNKECNDVFKIVQPTEVCLSIAGGRSACSGDSGGPLVIDNVQHGIVSYGSSYCRSTPSVFTRVSSYLNWLQTHSEWRAQ</sequence>
<reference evidence="8 9" key="1">
    <citation type="journal article" date="1999" name="Insect Biochem. Mol. Biol.">
        <title>Molecular cloning of cDNAs encoding a range of digestive enzymes from a phytophagous beetle, Phaedon cochleariae.</title>
        <authorList>
            <person name="Girard C."/>
            <person name="Jouanin L."/>
        </authorList>
    </citation>
    <scope>NUCLEOTIDE SEQUENCE [MRNA]</scope>
    <scope>TISSUE SPECIFICITY</scope>
    <scope>DEVELOPMENTAL STAGE</scope>
    <source>
        <tissue evidence="7">Larval gut</tissue>
    </source>
</reference>
<keyword id="KW-0177">Collagen degradation</keyword>
<keyword id="KW-0222">Digestion</keyword>
<keyword id="KW-1015">Disulfide bond</keyword>
<keyword id="KW-0325">Glycoprotein</keyword>
<keyword id="KW-0378">Hydrolase</keyword>
<keyword id="KW-0645">Protease</keyword>
<keyword id="KW-0964">Secreted</keyword>
<keyword id="KW-0720">Serine protease</keyword>
<keyword id="KW-0732">Signal</keyword>
<keyword id="KW-0865">Zymogen</keyword>
<proteinExistence type="evidence at transcript level"/>
<organism>
    <name type="scientific">Phaedon cochleariae</name>
    <name type="common">Mustard beetle</name>
    <dbReference type="NCBI Taxonomy" id="80249"/>
    <lineage>
        <taxon>Eukaryota</taxon>
        <taxon>Metazoa</taxon>
        <taxon>Ecdysozoa</taxon>
        <taxon>Arthropoda</taxon>
        <taxon>Hexapoda</taxon>
        <taxon>Insecta</taxon>
        <taxon>Pterygota</taxon>
        <taxon>Neoptera</taxon>
        <taxon>Endopterygota</taxon>
        <taxon>Coleoptera</taxon>
        <taxon>Polyphaga</taxon>
        <taxon>Cucujiformia</taxon>
        <taxon>Chrysomeloidea</taxon>
        <taxon>Chrysomelidae</taxon>
        <taxon>Chrysomelinae</taxon>
        <taxon>Chrysomelini</taxon>
        <taxon>Phaedon</taxon>
    </lineage>
</organism>
<protein>
    <recommendedName>
        <fullName>Chymotrypsin</fullName>
        <ecNumber>3.4.21.1</ecNumber>
    </recommendedName>
</protein>
<feature type="signal peptide" evidence="3">
    <location>
        <begin position="1"/>
        <end position="16"/>
    </location>
</feature>
<feature type="propeptide" id="PRO_0000314680" description="Activation peptide" evidence="2">
    <location>
        <begin position="17"/>
        <end position="45"/>
    </location>
</feature>
<feature type="chain" id="PRO_5000147324" description="Chymotrypsin" evidence="3">
    <location>
        <begin position="46"/>
        <end position="276"/>
    </location>
</feature>
<feature type="domain" description="Peptidase S1" evidence="4">
    <location>
        <begin position="46"/>
        <end position="272"/>
    </location>
</feature>
<feature type="active site" description="Charge relay system" evidence="1">
    <location>
        <position position="89"/>
    </location>
</feature>
<feature type="active site" description="Charge relay system" evidence="1">
    <location>
        <position position="135"/>
    </location>
</feature>
<feature type="active site" description="Charge relay system" evidence="1">
    <location>
        <position position="229"/>
    </location>
</feature>
<feature type="glycosylation site" description="N-linked (GlcNAc...) asparagine" evidence="3">
    <location>
        <position position="144"/>
    </location>
</feature>
<feature type="glycosylation site" description="N-linked (GlcNAc...) asparagine" evidence="3">
    <location>
        <position position="193"/>
    </location>
</feature>
<feature type="disulfide bond" evidence="1 4">
    <location>
        <begin position="74"/>
        <end position="90"/>
    </location>
</feature>
<feature type="disulfide bond" evidence="1 4">
    <location>
        <begin position="202"/>
        <end position="215"/>
    </location>
</feature>
<feature type="disulfide bond" evidence="1 4">
    <location>
        <begin position="225"/>
        <end position="250"/>
    </location>
</feature>
<accession>O97398</accession>
<accession>P81521</accession>